<evidence type="ECO:0000250" key="1"/>
<evidence type="ECO:0000305" key="2"/>
<proteinExistence type="evidence at transcript level"/>
<protein>
    <recommendedName>
        <fullName>Sulfotransferase 1 family member D1</fullName>
        <shortName>ST1D1</shortName>
        <ecNumber>2.8.2.-</ecNumber>
    </recommendedName>
    <alternativeName>
        <fullName>Dopamine sulfotransferase Sult1d1</fullName>
    </alternativeName>
    <alternativeName>
        <fullName>Tyrosine-ester sulfotransferase</fullName>
    </alternativeName>
</protein>
<accession>G3V9R3</accession>
<accession>Q9Z1G0</accession>
<gene>
    <name type="primary">Sult1d1</name>
</gene>
<comment type="function">
    <text evidence="1">Sulfotransferase with broad substrate specificity that utilizes 3'-phospho-5'-adenylyl sulfate (PAPS) as sulfonate donor to catalyze the sulfate conjugation of catecholamines, such as dopamine, prostaglandins, leukotriene E4, drugs and xenobiotic compounds. Has sulfotransferase activity towards p-nitrophenol, 2-naphthylamine and minoxidil (in vitro). Sulfonation increases the water solubility of most compounds, and therefore their renal excretion, but it can also result in bioactivation to form active metabolites (By similarity).</text>
</comment>
<comment type="subcellular location">
    <subcellularLocation>
        <location evidence="1">Cytoplasm</location>
    </subcellularLocation>
</comment>
<comment type="similarity">
    <text evidence="2">Belongs to the sulfotransferase 1 family.</text>
</comment>
<comment type="sequence caution" evidence="2">
    <conflict type="frameshift">
        <sequence resource="EMBL-CDS" id="AAC99890"/>
    </conflict>
</comment>
<organism>
    <name type="scientific">Rattus norvegicus</name>
    <name type="common">Rat</name>
    <dbReference type="NCBI Taxonomy" id="10116"/>
    <lineage>
        <taxon>Eukaryota</taxon>
        <taxon>Metazoa</taxon>
        <taxon>Chordata</taxon>
        <taxon>Craniata</taxon>
        <taxon>Vertebrata</taxon>
        <taxon>Euteleostomi</taxon>
        <taxon>Mammalia</taxon>
        <taxon>Eutheria</taxon>
        <taxon>Euarchontoglires</taxon>
        <taxon>Glires</taxon>
        <taxon>Rodentia</taxon>
        <taxon>Myomorpha</taxon>
        <taxon>Muroidea</taxon>
        <taxon>Muridae</taxon>
        <taxon>Murinae</taxon>
        <taxon>Rattus</taxon>
    </lineage>
</organism>
<name>ST1D1_RAT</name>
<keyword id="KW-0128">Catecholamine metabolism</keyword>
<keyword id="KW-0963">Cytoplasm</keyword>
<keyword id="KW-0443">Lipid metabolism</keyword>
<keyword id="KW-1185">Reference proteome</keyword>
<keyword id="KW-0808">Transferase</keyword>
<sequence length="295" mass="35004">MDNKLDVFRRELVDVQGIPLFWSIAEQWSQVESFEARPDDILISTYPKSGTTWISEILDLIYNNGDAEKCKRDAIYRRVPFMELIIPGITNGVEMLNNMQSPRLVKTHLPVQLLPSSFWKNDCKMIYVARNAKDVAVSYYYFHQMAKMHPEPGTWEEFLEKFMAGQVSFGPWYDHVKGWWEKRKEYRILYLFYEDMKEDPKCEIQKVLKFLEKDIPEEVVNKILYHSSFSVMKANPSANYTTMMKEEMDQSVSPFMRKGISGDWKNQFTVAQYEKFEEDYVKKMEESTLKFRSEI</sequence>
<feature type="chain" id="PRO_0000416460" description="Sulfotransferase 1 family member D1">
    <location>
        <begin position="1"/>
        <end position="295"/>
    </location>
</feature>
<feature type="active site" description="Proton acceptor" evidence="1">
    <location>
        <position position="108"/>
    </location>
</feature>
<feature type="binding site" evidence="1">
    <location>
        <begin position="48"/>
        <end position="53"/>
    </location>
    <ligand>
        <name>3'-phosphoadenylyl sulfate</name>
        <dbReference type="ChEBI" id="CHEBI:58339"/>
    </ligand>
</feature>
<feature type="binding site" evidence="1">
    <location>
        <position position="81"/>
    </location>
    <ligand>
        <name>substrate</name>
    </ligand>
</feature>
<feature type="binding site" evidence="1">
    <location>
        <begin position="106"/>
        <end position="108"/>
    </location>
    <ligand>
        <name>substrate</name>
    </ligand>
</feature>
<feature type="binding site" evidence="1">
    <location>
        <position position="130"/>
    </location>
    <ligand>
        <name>3'-phosphoadenylyl sulfate</name>
        <dbReference type="ChEBI" id="CHEBI:58339"/>
    </ligand>
</feature>
<feature type="binding site" evidence="1">
    <location>
        <position position="138"/>
    </location>
    <ligand>
        <name>3'-phosphoadenylyl sulfate</name>
        <dbReference type="ChEBI" id="CHEBI:58339"/>
    </ligand>
</feature>
<feature type="binding site" evidence="1">
    <location>
        <position position="142"/>
    </location>
    <ligand>
        <name>substrate</name>
    </ligand>
</feature>
<feature type="binding site" evidence="1">
    <location>
        <position position="193"/>
    </location>
    <ligand>
        <name>3'-phosphoadenylyl sulfate</name>
        <dbReference type="ChEBI" id="CHEBI:58339"/>
    </ligand>
</feature>
<feature type="binding site" evidence="1">
    <location>
        <position position="227"/>
    </location>
    <ligand>
        <name>3'-phosphoadenylyl sulfate</name>
        <dbReference type="ChEBI" id="CHEBI:58339"/>
    </ligand>
</feature>
<feature type="binding site" evidence="1">
    <location>
        <begin position="257"/>
        <end position="259"/>
    </location>
    <ligand>
        <name>3'-phosphoadenylyl sulfate</name>
        <dbReference type="ChEBI" id="CHEBI:58339"/>
    </ligand>
</feature>
<feature type="sequence conflict" description="In Ref. 1; AAC99890." evidence="2" ref="1">
    <original>N</original>
    <variation>D</variation>
    <location>
        <position position="97"/>
    </location>
</feature>
<feature type="sequence conflict" description="In Ref. 1; AAC99890." evidence="2" ref="1">
    <original>K</original>
    <variation>R</variation>
    <location>
        <position position="120"/>
    </location>
</feature>
<feature type="sequence conflict" description="In Ref. 1; AAC99890." evidence="2" ref="1">
    <original>L</original>
    <variation>C</variation>
    <location>
        <position position="191"/>
    </location>
</feature>
<reference key="1">
    <citation type="submission" date="1995-07" db="EMBL/GenBank/DDBJ databases">
        <title>Isolation and expression of cDNA encoding tyrosine-ester sulfotransferase from rat kidney.</title>
        <authorList>
            <person name="Herrmann A."/>
            <person name="Stoffel W."/>
        </authorList>
    </citation>
    <scope>NUCLEOTIDE SEQUENCE [MRNA]</scope>
    <source>
        <strain>Sprague-Dawley</strain>
        <tissue>Kidney</tissue>
    </source>
</reference>
<reference key="2">
    <citation type="journal article" date="2004" name="Nature">
        <title>Genome sequence of the Brown Norway rat yields insights into mammalian evolution.</title>
        <authorList>
            <person name="Gibbs R.A."/>
            <person name="Weinstock G.M."/>
            <person name="Metzker M.L."/>
            <person name="Muzny D.M."/>
            <person name="Sodergren E.J."/>
            <person name="Scherer S."/>
            <person name="Scott G."/>
            <person name="Steffen D."/>
            <person name="Worley K.C."/>
            <person name="Burch P.E."/>
            <person name="Okwuonu G."/>
            <person name="Hines S."/>
            <person name="Lewis L."/>
            <person name="Deramo C."/>
            <person name="Delgado O."/>
            <person name="Dugan-Rocha S."/>
            <person name="Miner G."/>
            <person name="Morgan M."/>
            <person name="Hawes A."/>
            <person name="Gill R."/>
            <person name="Holt R.A."/>
            <person name="Adams M.D."/>
            <person name="Amanatides P.G."/>
            <person name="Baden-Tillson H."/>
            <person name="Barnstead M."/>
            <person name="Chin S."/>
            <person name="Evans C.A."/>
            <person name="Ferriera S."/>
            <person name="Fosler C."/>
            <person name="Glodek A."/>
            <person name="Gu Z."/>
            <person name="Jennings D."/>
            <person name="Kraft C.L."/>
            <person name="Nguyen T."/>
            <person name="Pfannkoch C.M."/>
            <person name="Sitter C."/>
            <person name="Sutton G.G."/>
            <person name="Venter J.C."/>
            <person name="Woodage T."/>
            <person name="Smith D."/>
            <person name="Lee H.-M."/>
            <person name="Gustafson E."/>
            <person name="Cahill P."/>
            <person name="Kana A."/>
            <person name="Doucette-Stamm L."/>
            <person name="Weinstock K."/>
            <person name="Fechtel K."/>
            <person name="Weiss R.B."/>
            <person name="Dunn D.M."/>
            <person name="Green E.D."/>
            <person name="Blakesley R.W."/>
            <person name="Bouffard G.G."/>
            <person name="De Jong P.J."/>
            <person name="Osoegawa K."/>
            <person name="Zhu B."/>
            <person name="Marra M."/>
            <person name="Schein J."/>
            <person name="Bosdet I."/>
            <person name="Fjell C."/>
            <person name="Jones S."/>
            <person name="Krzywinski M."/>
            <person name="Mathewson C."/>
            <person name="Siddiqui A."/>
            <person name="Wye N."/>
            <person name="McPherson J."/>
            <person name="Zhao S."/>
            <person name="Fraser C.M."/>
            <person name="Shetty J."/>
            <person name="Shatsman S."/>
            <person name="Geer K."/>
            <person name="Chen Y."/>
            <person name="Abramzon S."/>
            <person name="Nierman W.C."/>
            <person name="Havlak P.H."/>
            <person name="Chen R."/>
            <person name="Durbin K.J."/>
            <person name="Egan A."/>
            <person name="Ren Y."/>
            <person name="Song X.-Z."/>
            <person name="Li B."/>
            <person name="Liu Y."/>
            <person name="Qin X."/>
            <person name="Cawley S."/>
            <person name="Cooney A.J."/>
            <person name="D'Souza L.M."/>
            <person name="Martin K."/>
            <person name="Wu J.Q."/>
            <person name="Gonzalez-Garay M.L."/>
            <person name="Jackson A.R."/>
            <person name="Kalafus K.J."/>
            <person name="McLeod M.P."/>
            <person name="Milosavljevic A."/>
            <person name="Virk D."/>
            <person name="Volkov A."/>
            <person name="Wheeler D.A."/>
            <person name="Zhang Z."/>
            <person name="Bailey J.A."/>
            <person name="Eichler E.E."/>
            <person name="Tuzun E."/>
            <person name="Birney E."/>
            <person name="Mongin E."/>
            <person name="Ureta-Vidal A."/>
            <person name="Woodwark C."/>
            <person name="Zdobnov E."/>
            <person name="Bork P."/>
            <person name="Suyama M."/>
            <person name="Torrents D."/>
            <person name="Alexandersson M."/>
            <person name="Trask B.J."/>
            <person name="Young J.M."/>
            <person name="Huang H."/>
            <person name="Wang H."/>
            <person name="Xing H."/>
            <person name="Daniels S."/>
            <person name="Gietzen D."/>
            <person name="Schmidt J."/>
            <person name="Stevens K."/>
            <person name="Vitt U."/>
            <person name="Wingrove J."/>
            <person name="Camara F."/>
            <person name="Mar Alba M."/>
            <person name="Abril J.F."/>
            <person name="Guigo R."/>
            <person name="Smit A."/>
            <person name="Dubchak I."/>
            <person name="Rubin E.M."/>
            <person name="Couronne O."/>
            <person name="Poliakov A."/>
            <person name="Huebner N."/>
            <person name="Ganten D."/>
            <person name="Goesele C."/>
            <person name="Hummel O."/>
            <person name="Kreitler T."/>
            <person name="Lee Y.-A."/>
            <person name="Monti J."/>
            <person name="Schulz H."/>
            <person name="Zimdahl H."/>
            <person name="Himmelbauer H."/>
            <person name="Lehrach H."/>
            <person name="Jacob H.J."/>
            <person name="Bromberg S."/>
            <person name="Gullings-Handley J."/>
            <person name="Jensen-Seaman M.I."/>
            <person name="Kwitek A.E."/>
            <person name="Lazar J."/>
            <person name="Pasko D."/>
            <person name="Tonellato P.J."/>
            <person name="Twigger S."/>
            <person name="Ponting C.P."/>
            <person name="Duarte J.M."/>
            <person name="Rice S."/>
            <person name="Goodstadt L."/>
            <person name="Beatson S.A."/>
            <person name="Emes R.D."/>
            <person name="Winter E.E."/>
            <person name="Webber C."/>
            <person name="Brandt P."/>
            <person name="Nyakatura G."/>
            <person name="Adetobi M."/>
            <person name="Chiaromonte F."/>
            <person name="Elnitski L."/>
            <person name="Eswara P."/>
            <person name="Hardison R.C."/>
            <person name="Hou M."/>
            <person name="Kolbe D."/>
            <person name="Makova K."/>
            <person name="Miller W."/>
            <person name="Nekrutenko A."/>
            <person name="Riemer C."/>
            <person name="Schwartz S."/>
            <person name="Taylor J."/>
            <person name="Yang S."/>
            <person name="Zhang Y."/>
            <person name="Lindpaintner K."/>
            <person name="Andrews T.D."/>
            <person name="Caccamo M."/>
            <person name="Clamp M."/>
            <person name="Clarke L."/>
            <person name="Curwen V."/>
            <person name="Durbin R.M."/>
            <person name="Eyras E."/>
            <person name="Searle S.M."/>
            <person name="Cooper G.M."/>
            <person name="Batzoglou S."/>
            <person name="Brudno M."/>
            <person name="Sidow A."/>
            <person name="Stone E.A."/>
            <person name="Payseur B.A."/>
            <person name="Bourque G."/>
            <person name="Lopez-Otin C."/>
            <person name="Puente X.S."/>
            <person name="Chakrabarti K."/>
            <person name="Chatterji S."/>
            <person name="Dewey C."/>
            <person name="Pachter L."/>
            <person name="Bray N."/>
            <person name="Yap V.B."/>
            <person name="Caspi A."/>
            <person name="Tesler G."/>
            <person name="Pevzner P.A."/>
            <person name="Haussler D."/>
            <person name="Roskin K.M."/>
            <person name="Baertsch R."/>
            <person name="Clawson H."/>
            <person name="Furey T.S."/>
            <person name="Hinrichs A.S."/>
            <person name="Karolchik D."/>
            <person name="Kent W.J."/>
            <person name="Rosenbloom K.R."/>
            <person name="Trumbower H."/>
            <person name="Weirauch M."/>
            <person name="Cooper D.N."/>
            <person name="Stenson P.D."/>
            <person name="Ma B."/>
            <person name="Brent M."/>
            <person name="Arumugam M."/>
            <person name="Shteynberg D."/>
            <person name="Copley R.R."/>
            <person name="Taylor M.S."/>
            <person name="Riethman H."/>
            <person name="Mudunuri U."/>
            <person name="Peterson J."/>
            <person name="Guyer M."/>
            <person name="Felsenfeld A."/>
            <person name="Old S."/>
            <person name="Mockrin S."/>
            <person name="Collins F.S."/>
        </authorList>
    </citation>
    <scope>NUCLEOTIDE SEQUENCE [LARGE SCALE GENOMIC DNA]</scope>
    <source>
        <strain>Brown Norway</strain>
    </source>
</reference>
<reference key="3">
    <citation type="submission" date="2005-07" db="EMBL/GenBank/DDBJ databases">
        <authorList>
            <person name="Mural R.J."/>
            <person name="Adams M.D."/>
            <person name="Myers E.W."/>
            <person name="Smith H.O."/>
            <person name="Venter J.C."/>
        </authorList>
    </citation>
    <scope>NUCLEOTIDE SEQUENCE [LARGE SCALE GENOMIC DNA]</scope>
    <source>
        <strain>Brown Norway</strain>
    </source>
</reference>
<dbReference type="EC" id="2.8.2.-"/>
<dbReference type="EMBL" id="U32372">
    <property type="protein sequence ID" value="AAC99890.1"/>
    <property type="status" value="ALT_FRAME"/>
    <property type="molecule type" value="mRNA"/>
</dbReference>
<dbReference type="EMBL" id="CH474125">
    <property type="protein sequence ID" value="EDL83152.1"/>
    <property type="molecule type" value="Genomic_DNA"/>
</dbReference>
<dbReference type="RefSeq" id="NP_068537.2">
    <property type="nucleotide sequence ID" value="NM_021769.2"/>
</dbReference>
<dbReference type="RefSeq" id="XP_038948296.1">
    <property type="nucleotide sequence ID" value="XM_039092368.2"/>
</dbReference>
<dbReference type="SMR" id="G3V9R3"/>
<dbReference type="FunCoup" id="G3V9R3">
    <property type="interactions" value="39"/>
</dbReference>
<dbReference type="STRING" id="10116.ENSRNOP00000056924"/>
<dbReference type="PhosphoSitePlus" id="G3V9R3"/>
<dbReference type="PaxDb" id="10116-ENSRNOP00000066303"/>
<dbReference type="Ensembl" id="ENSRNOT00000072483.3">
    <property type="protein sequence ID" value="ENSRNOP00000066303.2"/>
    <property type="gene ID" value="ENSRNOG00000001960.9"/>
</dbReference>
<dbReference type="GeneID" id="60393"/>
<dbReference type="KEGG" id="rno:60393"/>
<dbReference type="UCSC" id="RGD:620491">
    <property type="organism name" value="rat"/>
</dbReference>
<dbReference type="AGR" id="RGD:620491"/>
<dbReference type="CTD" id="53315"/>
<dbReference type="RGD" id="620491">
    <property type="gene designation" value="Sult1d1"/>
</dbReference>
<dbReference type="eggNOG" id="KOG1584">
    <property type="taxonomic scope" value="Eukaryota"/>
</dbReference>
<dbReference type="GeneTree" id="ENSGT00940000162879"/>
<dbReference type="InParanoid" id="G3V9R3"/>
<dbReference type="OMA" id="IAEEWSQ"/>
<dbReference type="OrthoDB" id="205623at2759"/>
<dbReference type="PhylomeDB" id="G3V9R3"/>
<dbReference type="TreeFam" id="TF321745"/>
<dbReference type="PRO" id="PR:G3V9R3"/>
<dbReference type="Proteomes" id="UP000002494">
    <property type="component" value="Chromosome 14"/>
</dbReference>
<dbReference type="Proteomes" id="UP000234681">
    <property type="component" value="Chromosome 14"/>
</dbReference>
<dbReference type="Bgee" id="ENSRNOG00000001960">
    <property type="expression patterns" value="Expressed in esophagus and 10 other cell types or tissues"/>
</dbReference>
<dbReference type="ExpressionAtlas" id="G3V9R3">
    <property type="expression patterns" value="baseline and differential"/>
</dbReference>
<dbReference type="GO" id="GO:0005737">
    <property type="term" value="C:cytoplasm"/>
    <property type="evidence" value="ECO:0000318"/>
    <property type="project" value="GO_Central"/>
</dbReference>
<dbReference type="GO" id="GO:0004062">
    <property type="term" value="F:aryl sulfotransferase activity"/>
    <property type="evidence" value="ECO:0000318"/>
    <property type="project" value="GO_Central"/>
</dbReference>
<dbReference type="GO" id="GO:0006584">
    <property type="term" value="P:catecholamine metabolic process"/>
    <property type="evidence" value="ECO:0007669"/>
    <property type="project" value="UniProtKB-KW"/>
</dbReference>
<dbReference type="GO" id="GO:0006629">
    <property type="term" value="P:lipid metabolic process"/>
    <property type="evidence" value="ECO:0007669"/>
    <property type="project" value="UniProtKB-KW"/>
</dbReference>
<dbReference type="GO" id="GO:0000103">
    <property type="term" value="P:sulfate assimilation"/>
    <property type="evidence" value="ECO:0007669"/>
    <property type="project" value="Ensembl"/>
</dbReference>
<dbReference type="GO" id="GO:0051923">
    <property type="term" value="P:sulfation"/>
    <property type="evidence" value="ECO:0000318"/>
    <property type="project" value="GO_Central"/>
</dbReference>
<dbReference type="FunFam" id="3.40.50.300:FF:000433">
    <property type="entry name" value="Estrogen sulfotransferase"/>
    <property type="match status" value="1"/>
</dbReference>
<dbReference type="Gene3D" id="3.40.50.300">
    <property type="entry name" value="P-loop containing nucleotide triphosphate hydrolases"/>
    <property type="match status" value="1"/>
</dbReference>
<dbReference type="InterPro" id="IPR027417">
    <property type="entry name" value="P-loop_NTPase"/>
</dbReference>
<dbReference type="InterPro" id="IPR000863">
    <property type="entry name" value="Sulfotransferase_dom"/>
</dbReference>
<dbReference type="PANTHER" id="PTHR11783">
    <property type="entry name" value="SULFOTRANSFERASE SULT"/>
    <property type="match status" value="1"/>
</dbReference>
<dbReference type="Pfam" id="PF00685">
    <property type="entry name" value="Sulfotransfer_1"/>
    <property type="match status" value="1"/>
</dbReference>
<dbReference type="SUPFAM" id="SSF52540">
    <property type="entry name" value="P-loop containing nucleoside triphosphate hydrolases"/>
    <property type="match status" value="1"/>
</dbReference>